<organism>
    <name type="scientific">Vibrio cholerae serotype O1 (strain M66-2)</name>
    <dbReference type="NCBI Taxonomy" id="579112"/>
    <lineage>
        <taxon>Bacteria</taxon>
        <taxon>Pseudomonadati</taxon>
        <taxon>Pseudomonadota</taxon>
        <taxon>Gammaproteobacteria</taxon>
        <taxon>Vibrionales</taxon>
        <taxon>Vibrionaceae</taxon>
        <taxon>Vibrio</taxon>
    </lineage>
</organism>
<protein>
    <recommendedName>
        <fullName evidence="1">Sulfate adenylyltransferase subunit 2</fullName>
        <ecNumber evidence="1">2.7.7.4</ecNumber>
    </recommendedName>
    <alternativeName>
        <fullName evidence="1">ATP-sulfurylase small subunit</fullName>
    </alternativeName>
    <alternativeName>
        <fullName evidence="1">Sulfate adenylate transferase</fullName>
        <shortName evidence="1">SAT</shortName>
    </alternativeName>
</protein>
<sequence>MDQQRLTHLKQLEAESIHIIREVAAEFDNPVMMYSIGKDSSVMLHLTRKAFYPGKIPFPLLHVDTDWKFRDMITFRDTTAKKYGFDLIVHKNPEGLAAGINPFDHGSSKHTDIMKTQGLKQALNKYGFDAAFGGARRDEEKSRAKERVYSFRDKNHTWDPKNQRPELWRTYNGQINKGESIRVFPLSNWTELDIWQYIYLENIEIVPLYLADVRPVVQRDGMLIMVDDDRMKLREGEQIEHKSVRFRTLGCYPLTGAIESQANTLTEIIEEMLVATSSERQGRAIDHDQSGSMELKKRQGYF</sequence>
<gene>
    <name evidence="1" type="primary">cysD</name>
    <name type="ordered locus">VCM66_2480</name>
</gene>
<comment type="function">
    <text evidence="1">With CysN forms the ATP sulfurylase (ATPS) that catalyzes the adenylation of sulfate producing adenosine 5'-phosphosulfate (APS) and diphosphate, the first enzymatic step in sulfur assimilation pathway. APS synthesis involves the formation of a high-energy phosphoric-sulfuric acid anhydride bond driven by GTP hydrolysis by CysN coupled to ATP hydrolysis by CysD.</text>
</comment>
<comment type="catalytic activity">
    <reaction evidence="1">
        <text>sulfate + ATP + H(+) = adenosine 5'-phosphosulfate + diphosphate</text>
        <dbReference type="Rhea" id="RHEA:18133"/>
        <dbReference type="ChEBI" id="CHEBI:15378"/>
        <dbReference type="ChEBI" id="CHEBI:16189"/>
        <dbReference type="ChEBI" id="CHEBI:30616"/>
        <dbReference type="ChEBI" id="CHEBI:33019"/>
        <dbReference type="ChEBI" id="CHEBI:58243"/>
        <dbReference type="EC" id="2.7.7.4"/>
    </reaction>
</comment>
<comment type="pathway">
    <text evidence="1">Sulfur metabolism; hydrogen sulfide biosynthesis; sulfite from sulfate: step 1/3.</text>
</comment>
<comment type="subunit">
    <text evidence="1">Heterodimer composed of CysD, the smaller subunit, and CysN.</text>
</comment>
<comment type="similarity">
    <text evidence="1">Belongs to the PAPS reductase family. CysD subfamily.</text>
</comment>
<evidence type="ECO:0000255" key="1">
    <source>
        <dbReference type="HAMAP-Rule" id="MF_00064"/>
    </source>
</evidence>
<evidence type="ECO:0000256" key="2">
    <source>
        <dbReference type="SAM" id="MobiDB-lite"/>
    </source>
</evidence>
<reference key="1">
    <citation type="journal article" date="2008" name="PLoS ONE">
        <title>A recalibrated molecular clock and independent origins for the cholera pandemic clones.</title>
        <authorList>
            <person name="Feng L."/>
            <person name="Reeves P.R."/>
            <person name="Lan R."/>
            <person name="Ren Y."/>
            <person name="Gao C."/>
            <person name="Zhou Z."/>
            <person name="Ren Y."/>
            <person name="Cheng J."/>
            <person name="Wang W."/>
            <person name="Wang J."/>
            <person name="Qian W."/>
            <person name="Li D."/>
            <person name="Wang L."/>
        </authorList>
    </citation>
    <scope>NUCLEOTIDE SEQUENCE [LARGE SCALE GENOMIC DNA]</scope>
    <source>
        <strain>M66-2</strain>
    </source>
</reference>
<dbReference type="EC" id="2.7.7.4" evidence="1"/>
<dbReference type="EMBL" id="CP001233">
    <property type="protein sequence ID" value="ACP06777.1"/>
    <property type="molecule type" value="Genomic_DNA"/>
</dbReference>
<dbReference type="SMR" id="C3LRM2"/>
<dbReference type="KEGG" id="vcm:VCM66_2480"/>
<dbReference type="HOGENOM" id="CLU_043026_0_0_6"/>
<dbReference type="UniPathway" id="UPA00140">
    <property type="reaction ID" value="UER00204"/>
</dbReference>
<dbReference type="Proteomes" id="UP000001217">
    <property type="component" value="Chromosome I"/>
</dbReference>
<dbReference type="GO" id="GO:0005524">
    <property type="term" value="F:ATP binding"/>
    <property type="evidence" value="ECO:0007669"/>
    <property type="project" value="UniProtKB-KW"/>
</dbReference>
<dbReference type="GO" id="GO:0004781">
    <property type="term" value="F:sulfate adenylyltransferase (ATP) activity"/>
    <property type="evidence" value="ECO:0007669"/>
    <property type="project" value="UniProtKB-UniRule"/>
</dbReference>
<dbReference type="GO" id="GO:0070814">
    <property type="term" value="P:hydrogen sulfide biosynthetic process"/>
    <property type="evidence" value="ECO:0007669"/>
    <property type="project" value="UniProtKB-UniRule"/>
</dbReference>
<dbReference type="GO" id="GO:0000103">
    <property type="term" value="P:sulfate assimilation"/>
    <property type="evidence" value="ECO:0007669"/>
    <property type="project" value="UniProtKB-UniRule"/>
</dbReference>
<dbReference type="CDD" id="cd23946">
    <property type="entry name" value="Sulfate_adenylyltransferase_2"/>
    <property type="match status" value="1"/>
</dbReference>
<dbReference type="FunFam" id="3.40.50.620:FF:000002">
    <property type="entry name" value="Sulfate adenylyltransferase subunit 2"/>
    <property type="match status" value="1"/>
</dbReference>
<dbReference type="Gene3D" id="3.40.50.620">
    <property type="entry name" value="HUPs"/>
    <property type="match status" value="1"/>
</dbReference>
<dbReference type="HAMAP" id="MF_00064">
    <property type="entry name" value="Sulf_adenylyltr_sub2"/>
    <property type="match status" value="1"/>
</dbReference>
<dbReference type="InterPro" id="IPR002500">
    <property type="entry name" value="PAPS_reduct_dom"/>
</dbReference>
<dbReference type="InterPro" id="IPR014729">
    <property type="entry name" value="Rossmann-like_a/b/a_fold"/>
</dbReference>
<dbReference type="InterPro" id="IPR011784">
    <property type="entry name" value="SO4_adenylTrfase_ssu"/>
</dbReference>
<dbReference type="InterPro" id="IPR050128">
    <property type="entry name" value="Sulfate_adenylyltrnsfr_sub2"/>
</dbReference>
<dbReference type="NCBIfam" id="TIGR02039">
    <property type="entry name" value="CysD"/>
    <property type="match status" value="1"/>
</dbReference>
<dbReference type="NCBIfam" id="NF003587">
    <property type="entry name" value="PRK05253.1"/>
    <property type="match status" value="1"/>
</dbReference>
<dbReference type="NCBIfam" id="NF009214">
    <property type="entry name" value="PRK12563.1"/>
    <property type="match status" value="1"/>
</dbReference>
<dbReference type="PANTHER" id="PTHR43196">
    <property type="entry name" value="SULFATE ADENYLYLTRANSFERASE SUBUNIT 2"/>
    <property type="match status" value="1"/>
</dbReference>
<dbReference type="PANTHER" id="PTHR43196:SF1">
    <property type="entry name" value="SULFATE ADENYLYLTRANSFERASE SUBUNIT 2"/>
    <property type="match status" value="1"/>
</dbReference>
<dbReference type="Pfam" id="PF01507">
    <property type="entry name" value="PAPS_reduct"/>
    <property type="match status" value="1"/>
</dbReference>
<dbReference type="PIRSF" id="PIRSF002936">
    <property type="entry name" value="CysDAde_trans"/>
    <property type="match status" value="1"/>
</dbReference>
<dbReference type="SUPFAM" id="SSF52402">
    <property type="entry name" value="Adenine nucleotide alpha hydrolases-like"/>
    <property type="match status" value="1"/>
</dbReference>
<accession>C3LRM2</accession>
<proteinExistence type="inferred from homology"/>
<keyword id="KW-0067">ATP-binding</keyword>
<keyword id="KW-0547">Nucleotide-binding</keyword>
<keyword id="KW-0548">Nucleotidyltransferase</keyword>
<keyword id="KW-0808">Transferase</keyword>
<feature type="chain" id="PRO_1000117948" description="Sulfate adenylyltransferase subunit 2">
    <location>
        <begin position="1"/>
        <end position="302"/>
    </location>
</feature>
<feature type="region of interest" description="Disordered" evidence="2">
    <location>
        <begin position="280"/>
        <end position="302"/>
    </location>
</feature>
<name>CYSD_VIBCM</name>